<name>CH60_TREPS</name>
<keyword id="KW-0067">ATP-binding</keyword>
<keyword id="KW-0143">Chaperone</keyword>
<keyword id="KW-0963">Cytoplasm</keyword>
<keyword id="KW-0413">Isomerase</keyword>
<keyword id="KW-0547">Nucleotide-binding</keyword>
<keyword id="KW-0346">Stress response</keyword>
<protein>
    <recommendedName>
        <fullName evidence="1">Chaperonin GroEL</fullName>
        <ecNumber evidence="1">5.6.1.7</ecNumber>
    </recommendedName>
    <alternativeName>
        <fullName evidence="1">60 kDa chaperonin</fullName>
    </alternativeName>
    <alternativeName>
        <fullName evidence="1">Chaperonin-60</fullName>
        <shortName evidence="1">Cpn60</shortName>
    </alternativeName>
</protein>
<comment type="function">
    <text evidence="1">Together with its co-chaperonin GroES, plays an essential role in assisting protein folding. The GroEL-GroES system forms a nano-cage that allows encapsulation of the non-native substrate proteins and provides a physical environment optimized to promote and accelerate protein folding.</text>
</comment>
<comment type="catalytic activity">
    <reaction evidence="1">
        <text>ATP + H2O + a folded polypeptide = ADP + phosphate + an unfolded polypeptide.</text>
        <dbReference type="EC" id="5.6.1.7"/>
    </reaction>
</comment>
<comment type="subunit">
    <text evidence="1">Forms a cylinder of 14 subunits composed of two heptameric rings stacked back-to-back. Interacts with the co-chaperonin GroES.</text>
</comment>
<comment type="subcellular location">
    <subcellularLocation>
        <location evidence="1">Cytoplasm</location>
    </subcellularLocation>
</comment>
<comment type="similarity">
    <text evidence="1">Belongs to the chaperonin (HSP60) family.</text>
</comment>
<gene>
    <name evidence="1" type="primary">groEL</name>
    <name evidence="1" type="synonym">groL</name>
    <name type="ordered locus">TPASS_0030</name>
</gene>
<evidence type="ECO:0000255" key="1">
    <source>
        <dbReference type="HAMAP-Rule" id="MF_00600"/>
    </source>
</evidence>
<dbReference type="EC" id="5.6.1.7" evidence="1"/>
<dbReference type="EMBL" id="CP000805">
    <property type="protein sequence ID" value="ACD70457.1"/>
    <property type="molecule type" value="Genomic_DNA"/>
</dbReference>
<dbReference type="RefSeq" id="WP_010881479.1">
    <property type="nucleotide sequence ID" value="NC_021508.1"/>
</dbReference>
<dbReference type="SMR" id="B2S1X8"/>
<dbReference type="GeneID" id="93875828"/>
<dbReference type="KEGG" id="tpp:TPASS_0030"/>
<dbReference type="PATRIC" id="fig|455434.6.peg.26"/>
<dbReference type="Proteomes" id="UP000001202">
    <property type="component" value="Chromosome"/>
</dbReference>
<dbReference type="GO" id="GO:0005737">
    <property type="term" value="C:cytoplasm"/>
    <property type="evidence" value="ECO:0007669"/>
    <property type="project" value="UniProtKB-SubCell"/>
</dbReference>
<dbReference type="GO" id="GO:0005524">
    <property type="term" value="F:ATP binding"/>
    <property type="evidence" value="ECO:0007669"/>
    <property type="project" value="UniProtKB-UniRule"/>
</dbReference>
<dbReference type="GO" id="GO:0140662">
    <property type="term" value="F:ATP-dependent protein folding chaperone"/>
    <property type="evidence" value="ECO:0007669"/>
    <property type="project" value="InterPro"/>
</dbReference>
<dbReference type="GO" id="GO:0016853">
    <property type="term" value="F:isomerase activity"/>
    <property type="evidence" value="ECO:0007669"/>
    <property type="project" value="UniProtKB-KW"/>
</dbReference>
<dbReference type="GO" id="GO:0051082">
    <property type="term" value="F:unfolded protein binding"/>
    <property type="evidence" value="ECO:0007669"/>
    <property type="project" value="UniProtKB-UniRule"/>
</dbReference>
<dbReference type="GO" id="GO:0042026">
    <property type="term" value="P:protein refolding"/>
    <property type="evidence" value="ECO:0007669"/>
    <property type="project" value="UniProtKB-UniRule"/>
</dbReference>
<dbReference type="CDD" id="cd03344">
    <property type="entry name" value="GroEL"/>
    <property type="match status" value="1"/>
</dbReference>
<dbReference type="FunFam" id="3.50.7.10:FF:000001">
    <property type="entry name" value="60 kDa chaperonin"/>
    <property type="match status" value="1"/>
</dbReference>
<dbReference type="Gene3D" id="3.50.7.10">
    <property type="entry name" value="GroEL"/>
    <property type="match status" value="1"/>
</dbReference>
<dbReference type="Gene3D" id="1.10.560.10">
    <property type="entry name" value="GroEL-like equatorial domain"/>
    <property type="match status" value="1"/>
</dbReference>
<dbReference type="Gene3D" id="3.30.260.10">
    <property type="entry name" value="TCP-1-like chaperonin intermediate domain"/>
    <property type="match status" value="1"/>
</dbReference>
<dbReference type="HAMAP" id="MF_00600">
    <property type="entry name" value="CH60"/>
    <property type="match status" value="1"/>
</dbReference>
<dbReference type="InterPro" id="IPR018370">
    <property type="entry name" value="Chaperonin_Cpn60_CS"/>
</dbReference>
<dbReference type="InterPro" id="IPR001844">
    <property type="entry name" value="Cpn60/GroEL"/>
</dbReference>
<dbReference type="InterPro" id="IPR002423">
    <property type="entry name" value="Cpn60/GroEL/TCP-1"/>
</dbReference>
<dbReference type="InterPro" id="IPR027409">
    <property type="entry name" value="GroEL-like_apical_dom_sf"/>
</dbReference>
<dbReference type="InterPro" id="IPR027413">
    <property type="entry name" value="GROEL-like_equatorial_sf"/>
</dbReference>
<dbReference type="InterPro" id="IPR027410">
    <property type="entry name" value="TCP-1-like_intermed_sf"/>
</dbReference>
<dbReference type="NCBIfam" id="TIGR02348">
    <property type="entry name" value="GroEL"/>
    <property type="match status" value="1"/>
</dbReference>
<dbReference type="NCBIfam" id="NF000592">
    <property type="entry name" value="PRK00013.1"/>
    <property type="match status" value="1"/>
</dbReference>
<dbReference type="NCBIfam" id="NF009487">
    <property type="entry name" value="PRK12849.1"/>
    <property type="match status" value="1"/>
</dbReference>
<dbReference type="NCBIfam" id="NF009488">
    <property type="entry name" value="PRK12850.1"/>
    <property type="match status" value="1"/>
</dbReference>
<dbReference type="NCBIfam" id="NF009489">
    <property type="entry name" value="PRK12851.1"/>
    <property type="match status" value="1"/>
</dbReference>
<dbReference type="PANTHER" id="PTHR45633">
    <property type="entry name" value="60 KDA HEAT SHOCK PROTEIN, MITOCHONDRIAL"/>
    <property type="match status" value="1"/>
</dbReference>
<dbReference type="Pfam" id="PF00118">
    <property type="entry name" value="Cpn60_TCP1"/>
    <property type="match status" value="1"/>
</dbReference>
<dbReference type="PRINTS" id="PR00298">
    <property type="entry name" value="CHAPERONIN60"/>
</dbReference>
<dbReference type="SUPFAM" id="SSF52029">
    <property type="entry name" value="GroEL apical domain-like"/>
    <property type="match status" value="1"/>
</dbReference>
<dbReference type="SUPFAM" id="SSF48592">
    <property type="entry name" value="GroEL equatorial domain-like"/>
    <property type="match status" value="1"/>
</dbReference>
<dbReference type="SUPFAM" id="SSF54849">
    <property type="entry name" value="GroEL-intermediate domain like"/>
    <property type="match status" value="1"/>
</dbReference>
<dbReference type="PROSITE" id="PS00296">
    <property type="entry name" value="CHAPERONINS_CPN60"/>
    <property type="match status" value="1"/>
</dbReference>
<accession>B2S1X8</accession>
<proteinExistence type="inferred from homology"/>
<feature type="chain" id="PRO_1000130074" description="Chaperonin GroEL">
    <location>
        <begin position="1"/>
        <end position="544"/>
    </location>
</feature>
<feature type="binding site" evidence="1">
    <location>
        <begin position="29"/>
        <end position="32"/>
    </location>
    <ligand>
        <name>ATP</name>
        <dbReference type="ChEBI" id="CHEBI:30616"/>
    </ligand>
</feature>
<feature type="binding site" evidence="1">
    <location>
        <position position="50"/>
    </location>
    <ligand>
        <name>ATP</name>
        <dbReference type="ChEBI" id="CHEBI:30616"/>
    </ligand>
</feature>
<feature type="binding site" evidence="1">
    <location>
        <begin position="86"/>
        <end position="90"/>
    </location>
    <ligand>
        <name>ATP</name>
        <dbReference type="ChEBI" id="CHEBI:30616"/>
    </ligand>
</feature>
<feature type="binding site" evidence="1">
    <location>
        <position position="414"/>
    </location>
    <ligand>
        <name>ATP</name>
        <dbReference type="ChEBI" id="CHEBI:30616"/>
    </ligand>
</feature>
<feature type="binding site" evidence="1">
    <location>
        <position position="495"/>
    </location>
    <ligand>
        <name>ATP</name>
        <dbReference type="ChEBI" id="CHEBI:30616"/>
    </ligand>
</feature>
<reference key="1">
    <citation type="journal article" date="2008" name="BMC Microbiol.">
        <title>Complete genome sequence of Treponema pallidum ssp. pallidum strain SS14 determined with oligonucleotide arrays.</title>
        <authorList>
            <person name="Matejkova P."/>
            <person name="Strouhal M."/>
            <person name="Smajs D."/>
            <person name="Norris S.J."/>
            <person name="Palzkill T."/>
            <person name="Petrosino J.F."/>
            <person name="Sodergren E."/>
            <person name="Norton J.E."/>
            <person name="Singh J."/>
            <person name="Richmond T.A."/>
            <person name="Molla M.N."/>
            <person name="Albert T.J."/>
            <person name="Weinstock G.M."/>
        </authorList>
    </citation>
    <scope>NUCLEOTIDE SEQUENCE [LARGE SCALE GENOMIC DNA]</scope>
    <source>
        <strain>SS14</strain>
    </source>
</reference>
<sequence>MAKQLLFNEEARKKLLSGVEQISSAVKVTLGPKGRNVLLEKGYGAPTVTKDGVSVAKEVELEDPFENMGAQLLKEVATKTNDVAGDGTTTATVLAYSMVREGLKAVAAGMTPLELKRGMDKAVAIAVDDIKQNSKGIKSNEEVAHVASVSANNDKEIGRILASAIEKVGNDGVIDVDEAQTMETVTEFVEGMQFDRGYISSYFVTDRDRMETVYENPYILIYDKSISTMKDLLPLLEKIAQTGRPLLIIAEDVEGEALATLVVNSLRGTLKTCAVKAPGFGDRRKEMLEDIAILSGGQVISEDLGLKLESADIALLGQAKSVKVDKENTTIIDGSGKSKDIKDRIEQIKKQIEASTSDYDSEKLKERLAKLSGGVAVIKIGAVTEVEMKEKKHRVEDALNATRAAIEEGIVAGGGLALIQAAAALEKADLSGLTPDEAVGFKIVRRALEEPIRQISENAGIDGAVVAEKAKEKRGIGFDASKMEWVDMIKVGIIDPAKVTRSALQNAASVSGLLLTTECAIAAIPEKSSSTPPAPDMGGMGGMY</sequence>
<organism>
    <name type="scientific">Treponema pallidum subsp. pallidum (strain SS14)</name>
    <dbReference type="NCBI Taxonomy" id="455434"/>
    <lineage>
        <taxon>Bacteria</taxon>
        <taxon>Pseudomonadati</taxon>
        <taxon>Spirochaetota</taxon>
        <taxon>Spirochaetia</taxon>
        <taxon>Spirochaetales</taxon>
        <taxon>Treponemataceae</taxon>
        <taxon>Treponema</taxon>
    </lineage>
</organism>